<reference key="1">
    <citation type="journal article" date="1999" name="Nature">
        <title>Evidence for lateral gene transfer between Archaea and Bacteria from genome sequence of Thermotoga maritima.</title>
        <authorList>
            <person name="Nelson K.E."/>
            <person name="Clayton R.A."/>
            <person name="Gill S.R."/>
            <person name="Gwinn M.L."/>
            <person name="Dodson R.J."/>
            <person name="Haft D.H."/>
            <person name="Hickey E.K."/>
            <person name="Peterson J.D."/>
            <person name="Nelson W.C."/>
            <person name="Ketchum K.A."/>
            <person name="McDonald L.A."/>
            <person name="Utterback T.R."/>
            <person name="Malek J.A."/>
            <person name="Linher K.D."/>
            <person name="Garrett M.M."/>
            <person name="Stewart A.M."/>
            <person name="Cotton M.D."/>
            <person name="Pratt M.S."/>
            <person name="Phillips C.A."/>
            <person name="Richardson D.L."/>
            <person name="Heidelberg J.F."/>
            <person name="Sutton G.G."/>
            <person name="Fleischmann R.D."/>
            <person name="Eisen J.A."/>
            <person name="White O."/>
            <person name="Salzberg S.L."/>
            <person name="Smith H.O."/>
            <person name="Venter J.C."/>
            <person name="Fraser C.M."/>
        </authorList>
    </citation>
    <scope>NUCLEOTIDE SEQUENCE [LARGE SCALE GENOMIC DNA]</scope>
    <source>
        <strain>ATCC 43589 / DSM 3109 / JCM 10099 / NBRC 100826 / MSB8</strain>
    </source>
</reference>
<reference key="2">
    <citation type="journal article" date="2006" name="J. Bacteriol.">
        <title>Identification of methylation sites in Thermotoga maritima chemotaxis receptors.</title>
        <authorList>
            <person name="Perez E."/>
            <person name="Zheng H."/>
            <person name="Stock A.M."/>
        </authorList>
    </citation>
    <scope>METHYLATION AT GLN-274; GLU-281 AND GLU-505</scope>
    <scope>DEAMIDATION AT GLN-274 AND GLN-498</scope>
</reference>
<reference key="3">
    <citation type="journal article" date="2006" name="Nat. Struct. Mol. Biol.">
        <title>Reconstruction of the chemotaxis receptor-kinase assembly.</title>
        <authorList>
            <person name="Park S.-Y."/>
            <person name="Borbat P.P."/>
            <person name="Gonzalez-Bonet G."/>
            <person name="Bhatnagar J."/>
            <person name="Pollard A.M."/>
            <person name="Freed J.H."/>
            <person name="Bilwes A.M."/>
            <person name="Crane B.R."/>
        </authorList>
    </citation>
    <scope>X-RAY CRYSTALLOGRAPHY (2.5 ANGSTROMS) OF 225-529</scope>
</reference>
<evidence type="ECO:0000250" key="1"/>
<evidence type="ECO:0000255" key="2"/>
<evidence type="ECO:0000255" key="3">
    <source>
        <dbReference type="PROSITE-ProRule" id="PRU00284"/>
    </source>
</evidence>
<evidence type="ECO:0000269" key="4">
    <source>
    </source>
</evidence>
<evidence type="ECO:0000305" key="5"/>
<evidence type="ECO:0007829" key="6">
    <source>
        <dbReference type="PDB" id="2CH7"/>
    </source>
</evidence>
<name>MCP2_THEMA</name>
<feature type="chain" id="PRO_0000250994" description="Methyl-accepting chemotaxis protein 2">
    <location>
        <begin position="1"/>
        <end position="530"/>
    </location>
</feature>
<feature type="transmembrane region" description="Helical" evidence="2">
    <location>
        <begin position="9"/>
        <end position="29"/>
    </location>
</feature>
<feature type="transmembrane region" description="Helical" evidence="2">
    <location>
        <begin position="151"/>
        <end position="171"/>
    </location>
</feature>
<feature type="domain" description="HAMP">
    <location>
        <begin position="152"/>
        <end position="222"/>
    </location>
</feature>
<feature type="domain" description="Methyl-accepting transducer" evidence="3">
    <location>
        <begin position="244"/>
        <end position="480"/>
    </location>
</feature>
<feature type="modified residue" description="Glutamate methyl ester (Gln)" evidence="4">
    <location>
        <position position="274"/>
    </location>
</feature>
<feature type="modified residue" description="Glutamate methyl ester (Glu)" evidence="4">
    <location>
        <position position="281"/>
    </location>
</feature>
<feature type="modified residue" description="Deamidated glutamine" evidence="4">
    <location>
        <position position="498"/>
    </location>
</feature>
<feature type="modified residue" description="Glutamate methyl ester (Glu)" evidence="4">
    <location>
        <position position="505"/>
    </location>
</feature>
<feature type="turn" evidence="6">
    <location>
        <begin position="222"/>
        <end position="224"/>
    </location>
</feature>
<feature type="helix" evidence="6">
    <location>
        <begin position="225"/>
        <end position="341"/>
    </location>
</feature>
<feature type="helix" evidence="6">
    <location>
        <begin position="344"/>
        <end position="372"/>
    </location>
</feature>
<feature type="helix" evidence="6">
    <location>
        <begin position="378"/>
        <end position="414"/>
    </location>
</feature>
<feature type="helix" evidence="6">
    <location>
        <begin position="417"/>
        <end position="432"/>
    </location>
</feature>
<feature type="helix" evidence="6">
    <location>
        <begin position="435"/>
        <end position="518"/>
    </location>
</feature>
<feature type="turn" evidence="6">
    <location>
        <begin position="520"/>
        <end position="522"/>
    </location>
</feature>
<feature type="helix" evidence="6">
    <location>
        <begin position="523"/>
        <end position="528"/>
    </location>
</feature>
<proteinExistence type="evidence at protein level"/>
<sequence length="530" mass="57929">MSLKGKTLLVSTITLAAVVLVALLGGSVFLKAGQNVRKAFEEYELAVEALDKLGELETKVALFVNNAAKIEEVSSLFNELKKVADKIPSLKEHMDALERNISEIISGKTEVVSRIQSSVDQVKEDIMANLDRTRENLDKEISYSSELIRNVLFIVLPIVAVASGVFLFVMISRSLRLLKPVMEASRSLRNNDLTINIQEAKGKDEISTLLNEFKASIEYLRNNLKDVQTETFSVAESIEEISKANEEITNQLLGISKEMDNISTRIESISASVQETTAGSEEISSATKNIADSAQQAASFADQSTQLAKEAGDALKKVIEVTRMISNSAKDVERVVESFQKGAEEITSFVETINAIAEQTNLLALNAAIEAARAGEAGRGFAVVADEIRKLAEESQQASENVRRVVNEIRSIAEDAGKVSSEITARVEEGTKLADEADEKLNSIVGAVERINEMLQNIAAAIEEQTAAVDEITTAMTENAKNAEEITNSVKEVNARLQEISASTEEVTSRVQTIRENVQMLKEIVARYKI</sequence>
<keyword id="KW-0002">3D-structure</keyword>
<keyword id="KW-1003">Cell membrane</keyword>
<keyword id="KW-0145">Chemotaxis</keyword>
<keyword id="KW-0472">Membrane</keyword>
<keyword id="KW-0488">Methylation</keyword>
<keyword id="KW-1185">Reference proteome</keyword>
<keyword id="KW-0807">Transducer</keyword>
<keyword id="KW-0812">Transmembrane</keyword>
<keyword id="KW-1133">Transmembrane helix</keyword>
<accession>Q9X0M7</accession>
<protein>
    <recommendedName>
        <fullName>Methyl-accepting chemotaxis protein 2</fullName>
    </recommendedName>
</protein>
<dbReference type="EMBL" id="AE000512">
    <property type="protein sequence ID" value="AAD36219.1"/>
    <property type="molecule type" value="Genomic_DNA"/>
</dbReference>
<dbReference type="PIR" id="C72291">
    <property type="entry name" value="C72291"/>
</dbReference>
<dbReference type="RefSeq" id="NP_228949.1">
    <property type="nucleotide sequence ID" value="NC_000853.1"/>
</dbReference>
<dbReference type="RefSeq" id="WP_004080253.1">
    <property type="nucleotide sequence ID" value="NC_000853.1"/>
</dbReference>
<dbReference type="PDB" id="2CH7">
    <property type="method" value="X-ray"/>
    <property type="resolution" value="2.50 A"/>
    <property type="chains" value="A/B=225-529"/>
</dbReference>
<dbReference type="PDB" id="3JA6">
    <property type="method" value="EM"/>
    <property type="resolution" value="12.70 A"/>
    <property type="chains" value="G/I/K/M/O/Q=225-529, H/J/L/N/P/R=225-528"/>
</dbReference>
<dbReference type="PDBsum" id="2CH7"/>
<dbReference type="PDBsum" id="3JA6"/>
<dbReference type="SMR" id="Q9X0M7"/>
<dbReference type="DIP" id="DIP-29072N"/>
<dbReference type="FunCoup" id="Q9X0M7">
    <property type="interactions" value="32"/>
</dbReference>
<dbReference type="STRING" id="243274.TM_1143"/>
<dbReference type="PaxDb" id="243274-THEMA_08630"/>
<dbReference type="EnsemblBacteria" id="AAD36219">
    <property type="protein sequence ID" value="AAD36219"/>
    <property type="gene ID" value="TM_1143"/>
</dbReference>
<dbReference type="KEGG" id="tma:TM1143"/>
<dbReference type="KEGG" id="tmi:THEMA_08630"/>
<dbReference type="KEGG" id="tmm:Tmari_1149"/>
<dbReference type="KEGG" id="tmw:THMA_1166"/>
<dbReference type="eggNOG" id="COG0840">
    <property type="taxonomic scope" value="Bacteria"/>
</dbReference>
<dbReference type="InParanoid" id="Q9X0M7"/>
<dbReference type="OrthoDB" id="107771at2"/>
<dbReference type="EvolutionaryTrace" id="Q9X0M7"/>
<dbReference type="Proteomes" id="UP000008183">
    <property type="component" value="Chromosome"/>
</dbReference>
<dbReference type="GO" id="GO:0005886">
    <property type="term" value="C:plasma membrane"/>
    <property type="evidence" value="ECO:0000318"/>
    <property type="project" value="GO_Central"/>
</dbReference>
<dbReference type="GO" id="GO:0004888">
    <property type="term" value="F:transmembrane signaling receptor activity"/>
    <property type="evidence" value="ECO:0000318"/>
    <property type="project" value="GO_Central"/>
</dbReference>
<dbReference type="GO" id="GO:0006935">
    <property type="term" value="P:chemotaxis"/>
    <property type="evidence" value="ECO:0000318"/>
    <property type="project" value="GO_Central"/>
</dbReference>
<dbReference type="GO" id="GO:0007165">
    <property type="term" value="P:signal transduction"/>
    <property type="evidence" value="ECO:0007669"/>
    <property type="project" value="UniProtKB-KW"/>
</dbReference>
<dbReference type="CDD" id="cd11386">
    <property type="entry name" value="MCP_signal"/>
    <property type="match status" value="1"/>
</dbReference>
<dbReference type="FunFam" id="1.10.287.950:FF:000003">
    <property type="entry name" value="Methyl-accepting chemotaxis protein"/>
    <property type="match status" value="1"/>
</dbReference>
<dbReference type="Gene3D" id="6.10.340.10">
    <property type="match status" value="1"/>
</dbReference>
<dbReference type="Gene3D" id="1.10.287.950">
    <property type="entry name" value="Methyl-accepting chemotaxis protein"/>
    <property type="match status" value="1"/>
</dbReference>
<dbReference type="InterPro" id="IPR004090">
    <property type="entry name" value="Chemotax_Me-accpt_rcpt"/>
</dbReference>
<dbReference type="InterPro" id="IPR051310">
    <property type="entry name" value="MCP_chemotaxis"/>
</dbReference>
<dbReference type="InterPro" id="IPR004089">
    <property type="entry name" value="MCPsignal_dom"/>
</dbReference>
<dbReference type="InterPro" id="IPR000727">
    <property type="entry name" value="T_SNARE_dom"/>
</dbReference>
<dbReference type="PANTHER" id="PTHR43531:SF11">
    <property type="entry name" value="METHYL-ACCEPTING CHEMOTAXIS PROTEIN 3"/>
    <property type="match status" value="1"/>
</dbReference>
<dbReference type="PANTHER" id="PTHR43531">
    <property type="entry name" value="PROTEIN ICFG"/>
    <property type="match status" value="1"/>
</dbReference>
<dbReference type="Pfam" id="PF00015">
    <property type="entry name" value="MCPsignal"/>
    <property type="match status" value="1"/>
</dbReference>
<dbReference type="PRINTS" id="PR00260">
    <property type="entry name" value="CHEMTRNSDUCR"/>
</dbReference>
<dbReference type="SMART" id="SM00283">
    <property type="entry name" value="MA"/>
    <property type="match status" value="1"/>
</dbReference>
<dbReference type="SUPFAM" id="SSF58104">
    <property type="entry name" value="Methyl-accepting chemotaxis protein (MCP) signaling domain"/>
    <property type="match status" value="1"/>
</dbReference>
<dbReference type="PROSITE" id="PS50111">
    <property type="entry name" value="CHEMOTAXIS_TRANSDUC_2"/>
    <property type="match status" value="1"/>
</dbReference>
<comment type="function">
    <text evidence="1">Chemotactic-signal transducers respond to changes in the concentration of attractants and repellents in the environment, transduce a signal from the outside to the inside of the cell, and facilitate sensory adaptation through the variation of the level of methylation.</text>
</comment>
<comment type="subcellular location">
    <subcellularLocation>
        <location evidence="5">Cell membrane</location>
        <topology evidence="5">Multi-pass membrane protein</topology>
    </subcellularLocation>
</comment>
<comment type="similarity">
    <text evidence="5">Belongs to the methyl-accepting chemotaxis (MCP) protein family.</text>
</comment>
<organism>
    <name type="scientific">Thermotoga maritima (strain ATCC 43589 / DSM 3109 / JCM 10099 / NBRC 100826 / MSB8)</name>
    <dbReference type="NCBI Taxonomy" id="243274"/>
    <lineage>
        <taxon>Bacteria</taxon>
        <taxon>Thermotogati</taxon>
        <taxon>Thermotogota</taxon>
        <taxon>Thermotogae</taxon>
        <taxon>Thermotogales</taxon>
        <taxon>Thermotogaceae</taxon>
        <taxon>Thermotoga</taxon>
    </lineage>
</organism>
<gene>
    <name type="primary">mcp2</name>
    <name type="ordered locus">TM_1143</name>
</gene>